<accession>Q7V9V8</accession>
<feature type="chain" id="PRO_0000122796" description="Protein RecA">
    <location>
        <begin position="1"/>
        <end position="379"/>
    </location>
</feature>
<feature type="region of interest" description="Disordered" evidence="2">
    <location>
        <begin position="1"/>
        <end position="24"/>
    </location>
</feature>
<feature type="compositionally biased region" description="Low complexity" evidence="2">
    <location>
        <begin position="1"/>
        <end position="14"/>
    </location>
</feature>
<feature type="binding site" evidence="1">
    <location>
        <begin position="84"/>
        <end position="91"/>
    </location>
    <ligand>
        <name>ATP</name>
        <dbReference type="ChEBI" id="CHEBI:30616"/>
    </ligand>
</feature>
<protein>
    <recommendedName>
        <fullName evidence="1">Protein RecA</fullName>
    </recommendedName>
    <alternativeName>
        <fullName evidence="1">Recombinase A</fullName>
    </alternativeName>
</protein>
<comment type="function">
    <text evidence="1">Can catalyze the hydrolysis of ATP in the presence of single-stranded DNA, the ATP-dependent uptake of single-stranded DNA by duplex DNA, and the ATP-dependent hybridization of homologous single-stranded DNAs. It interacts with LexA causing its activation and leading to its autocatalytic cleavage.</text>
</comment>
<comment type="subcellular location">
    <subcellularLocation>
        <location evidence="1">Cytoplasm</location>
    </subcellularLocation>
</comment>
<comment type="similarity">
    <text evidence="1">Belongs to the RecA family.</text>
</comment>
<reference key="1">
    <citation type="journal article" date="2003" name="Proc. Natl. Acad. Sci. U.S.A.">
        <title>Genome sequence of the cyanobacterium Prochlorococcus marinus SS120, a nearly minimal oxyphototrophic genome.</title>
        <authorList>
            <person name="Dufresne A."/>
            <person name="Salanoubat M."/>
            <person name="Partensky F."/>
            <person name="Artiguenave F."/>
            <person name="Axmann I.M."/>
            <person name="Barbe V."/>
            <person name="Duprat S."/>
            <person name="Galperin M.Y."/>
            <person name="Koonin E.V."/>
            <person name="Le Gall F."/>
            <person name="Makarova K.S."/>
            <person name="Ostrowski M."/>
            <person name="Oztas S."/>
            <person name="Robert C."/>
            <person name="Rogozin I.B."/>
            <person name="Scanlan D.J."/>
            <person name="Tandeau de Marsac N."/>
            <person name="Weissenbach J."/>
            <person name="Wincker P."/>
            <person name="Wolf Y.I."/>
            <person name="Hess W.R."/>
        </authorList>
    </citation>
    <scope>NUCLEOTIDE SEQUENCE [LARGE SCALE GENOMIC DNA]</scope>
    <source>
        <strain>SARG / CCMP1375 / SS120</strain>
    </source>
</reference>
<keyword id="KW-0067">ATP-binding</keyword>
<keyword id="KW-0963">Cytoplasm</keyword>
<keyword id="KW-0227">DNA damage</keyword>
<keyword id="KW-0233">DNA recombination</keyword>
<keyword id="KW-0234">DNA repair</keyword>
<keyword id="KW-0238">DNA-binding</keyword>
<keyword id="KW-0547">Nucleotide-binding</keyword>
<keyword id="KW-1185">Reference proteome</keyword>
<keyword id="KW-0742">SOS response</keyword>
<dbReference type="EMBL" id="AE017126">
    <property type="protein sequence ID" value="AAQ00760.1"/>
    <property type="molecule type" value="Genomic_DNA"/>
</dbReference>
<dbReference type="RefSeq" id="NP_876107.1">
    <property type="nucleotide sequence ID" value="NC_005042.1"/>
</dbReference>
<dbReference type="RefSeq" id="WP_011125865.1">
    <property type="nucleotide sequence ID" value="NC_005042.1"/>
</dbReference>
<dbReference type="SMR" id="Q7V9V8"/>
<dbReference type="STRING" id="167539.Pro_1716"/>
<dbReference type="EnsemblBacteria" id="AAQ00760">
    <property type="protein sequence ID" value="AAQ00760"/>
    <property type="gene ID" value="Pro_1716"/>
</dbReference>
<dbReference type="KEGG" id="pma:Pro_1716"/>
<dbReference type="PATRIC" id="fig|167539.5.peg.1811"/>
<dbReference type="eggNOG" id="COG0468">
    <property type="taxonomic scope" value="Bacteria"/>
</dbReference>
<dbReference type="HOGENOM" id="CLU_040469_3_2_3"/>
<dbReference type="OrthoDB" id="9776733at2"/>
<dbReference type="Proteomes" id="UP000001420">
    <property type="component" value="Chromosome"/>
</dbReference>
<dbReference type="GO" id="GO:0005829">
    <property type="term" value="C:cytosol"/>
    <property type="evidence" value="ECO:0007669"/>
    <property type="project" value="TreeGrafter"/>
</dbReference>
<dbReference type="GO" id="GO:0005524">
    <property type="term" value="F:ATP binding"/>
    <property type="evidence" value="ECO:0007669"/>
    <property type="project" value="UniProtKB-UniRule"/>
</dbReference>
<dbReference type="GO" id="GO:0016887">
    <property type="term" value="F:ATP hydrolysis activity"/>
    <property type="evidence" value="ECO:0007669"/>
    <property type="project" value="InterPro"/>
</dbReference>
<dbReference type="GO" id="GO:0140664">
    <property type="term" value="F:ATP-dependent DNA damage sensor activity"/>
    <property type="evidence" value="ECO:0007669"/>
    <property type="project" value="InterPro"/>
</dbReference>
<dbReference type="GO" id="GO:0003684">
    <property type="term" value="F:damaged DNA binding"/>
    <property type="evidence" value="ECO:0007669"/>
    <property type="project" value="UniProtKB-UniRule"/>
</dbReference>
<dbReference type="GO" id="GO:0003697">
    <property type="term" value="F:single-stranded DNA binding"/>
    <property type="evidence" value="ECO:0007669"/>
    <property type="project" value="UniProtKB-UniRule"/>
</dbReference>
<dbReference type="GO" id="GO:0006310">
    <property type="term" value="P:DNA recombination"/>
    <property type="evidence" value="ECO:0007669"/>
    <property type="project" value="UniProtKB-UniRule"/>
</dbReference>
<dbReference type="GO" id="GO:0006281">
    <property type="term" value="P:DNA repair"/>
    <property type="evidence" value="ECO:0007669"/>
    <property type="project" value="UniProtKB-UniRule"/>
</dbReference>
<dbReference type="GO" id="GO:0009432">
    <property type="term" value="P:SOS response"/>
    <property type="evidence" value="ECO:0007669"/>
    <property type="project" value="UniProtKB-UniRule"/>
</dbReference>
<dbReference type="CDD" id="cd00983">
    <property type="entry name" value="RecA"/>
    <property type="match status" value="1"/>
</dbReference>
<dbReference type="FunFam" id="3.40.50.300:FF:000087">
    <property type="entry name" value="Recombinase RecA"/>
    <property type="match status" value="1"/>
</dbReference>
<dbReference type="Gene3D" id="3.40.50.300">
    <property type="entry name" value="P-loop containing nucleotide triphosphate hydrolases"/>
    <property type="match status" value="1"/>
</dbReference>
<dbReference type="HAMAP" id="MF_00268">
    <property type="entry name" value="RecA"/>
    <property type="match status" value="1"/>
</dbReference>
<dbReference type="InterPro" id="IPR003593">
    <property type="entry name" value="AAA+_ATPase"/>
</dbReference>
<dbReference type="InterPro" id="IPR013765">
    <property type="entry name" value="DNA_recomb/repair_RecA"/>
</dbReference>
<dbReference type="InterPro" id="IPR020584">
    <property type="entry name" value="DNA_recomb/repair_RecA_CS"/>
</dbReference>
<dbReference type="InterPro" id="IPR027417">
    <property type="entry name" value="P-loop_NTPase"/>
</dbReference>
<dbReference type="InterPro" id="IPR049261">
    <property type="entry name" value="RecA-like_C"/>
</dbReference>
<dbReference type="InterPro" id="IPR049428">
    <property type="entry name" value="RecA-like_N"/>
</dbReference>
<dbReference type="InterPro" id="IPR020588">
    <property type="entry name" value="RecA_ATP-bd"/>
</dbReference>
<dbReference type="InterPro" id="IPR023400">
    <property type="entry name" value="RecA_C_sf"/>
</dbReference>
<dbReference type="InterPro" id="IPR020587">
    <property type="entry name" value="RecA_monomer-monomer_interface"/>
</dbReference>
<dbReference type="NCBIfam" id="TIGR02012">
    <property type="entry name" value="tigrfam_recA"/>
    <property type="match status" value="1"/>
</dbReference>
<dbReference type="PANTHER" id="PTHR45900:SF1">
    <property type="entry name" value="MITOCHONDRIAL DNA REPAIR PROTEIN RECA HOMOLOG-RELATED"/>
    <property type="match status" value="1"/>
</dbReference>
<dbReference type="PANTHER" id="PTHR45900">
    <property type="entry name" value="RECA"/>
    <property type="match status" value="1"/>
</dbReference>
<dbReference type="Pfam" id="PF00154">
    <property type="entry name" value="RecA"/>
    <property type="match status" value="1"/>
</dbReference>
<dbReference type="Pfam" id="PF21096">
    <property type="entry name" value="RecA_C"/>
    <property type="match status" value="1"/>
</dbReference>
<dbReference type="PRINTS" id="PR00142">
    <property type="entry name" value="RECA"/>
</dbReference>
<dbReference type="SMART" id="SM00382">
    <property type="entry name" value="AAA"/>
    <property type="match status" value="1"/>
</dbReference>
<dbReference type="SUPFAM" id="SSF52540">
    <property type="entry name" value="P-loop containing nucleoside triphosphate hydrolases"/>
    <property type="match status" value="1"/>
</dbReference>
<dbReference type="SUPFAM" id="SSF54752">
    <property type="entry name" value="RecA protein, C-terminal domain"/>
    <property type="match status" value="1"/>
</dbReference>
<dbReference type="PROSITE" id="PS00321">
    <property type="entry name" value="RECA_1"/>
    <property type="match status" value="1"/>
</dbReference>
<dbReference type="PROSITE" id="PS50162">
    <property type="entry name" value="RECA_2"/>
    <property type="match status" value="1"/>
</dbReference>
<dbReference type="PROSITE" id="PS50163">
    <property type="entry name" value="RECA_3"/>
    <property type="match status" value="1"/>
</dbReference>
<gene>
    <name evidence="1" type="primary">recA</name>
    <name type="ordered locus">Pro_1716</name>
</gene>
<evidence type="ECO:0000255" key="1">
    <source>
        <dbReference type="HAMAP-Rule" id="MF_00268"/>
    </source>
</evidence>
<evidence type="ECO:0000256" key="2">
    <source>
        <dbReference type="SAM" id="MobiDB-lite"/>
    </source>
</evidence>
<proteinExistence type="inferred from homology"/>
<sequence length="379" mass="40603">MSNEIKSISSSNSSCPPNEARSGERDKALSLVLGQIERNFGKGSIMRLGDASKMRVETISTGALTLDLALGGGYPKGRVVEVYGPESSGKTTLTLHAIAEVQKRGGVAAFVDAEHALDPVYAASLGVDIENLLVSQPDTGEMALEIVDQLIRSSAVDLVVVDSVAALTPRSEIEGEMGDHAVGSQARLMSQAMRKITGNIGKSGCTVIFLNQLRLKIGVTYGNPETTTGGNALKFYASVRLDIRRIQTLKRGTEEYGIRAKVKVAKNKVAPPFRIAEFDILFGKGISTLGCLLDMAEETNIVTRKGAWYSYEGDNIGQGRDNTITWLEENSEAKEKIEKLVRQKLTEGSEVSANSMKPLASAARAANTPPVMKKISNAA</sequence>
<name>RECA_PROMA</name>
<organism>
    <name type="scientific">Prochlorococcus marinus (strain SARG / CCMP1375 / SS120)</name>
    <dbReference type="NCBI Taxonomy" id="167539"/>
    <lineage>
        <taxon>Bacteria</taxon>
        <taxon>Bacillati</taxon>
        <taxon>Cyanobacteriota</taxon>
        <taxon>Cyanophyceae</taxon>
        <taxon>Synechococcales</taxon>
        <taxon>Prochlorococcaceae</taxon>
        <taxon>Prochlorococcus</taxon>
    </lineage>
</organism>